<protein>
    <recommendedName>
        <fullName evidence="1">Lipopolysaccharide export system protein LptC</fullName>
    </recommendedName>
</protein>
<sequence length="191" mass="21703">MSKARRWVIIVLSLAVLVMIGINMAEKDDTAQVVVNNNDPTYKSEHTDTLVYNPEGALSYRLIAQHVEYYSDQAVSWFTQPVLTTFDKDKIPTWSVKADKAKLTNDRMLYLYGHVEVNALVPDSQLRRITTDNAQINLVTQDVTSEDLVTLYGTTFNSSGLKMRGNLRSKNAELIEKVRTSYEIQNKQTQP</sequence>
<keyword id="KW-0002">3D-structure</keyword>
<keyword id="KW-0997">Cell inner membrane</keyword>
<keyword id="KW-1003">Cell membrane</keyword>
<keyword id="KW-0903">Direct protein sequencing</keyword>
<keyword id="KW-0472">Membrane</keyword>
<keyword id="KW-1185">Reference proteome</keyword>
<keyword id="KW-0812">Transmembrane</keyword>
<keyword id="KW-1133">Transmembrane helix</keyword>
<reference key="1">
    <citation type="journal article" date="1997" name="Science">
        <title>The complete genome sequence of Escherichia coli K-12.</title>
        <authorList>
            <person name="Blattner F.R."/>
            <person name="Plunkett G. III"/>
            <person name="Bloch C.A."/>
            <person name="Perna N.T."/>
            <person name="Burland V."/>
            <person name="Riley M."/>
            <person name="Collado-Vides J."/>
            <person name="Glasner J.D."/>
            <person name="Rode C.K."/>
            <person name="Mayhew G.F."/>
            <person name="Gregor J."/>
            <person name="Davis N.W."/>
            <person name="Kirkpatrick H.A."/>
            <person name="Goeden M.A."/>
            <person name="Rose D.J."/>
            <person name="Mau B."/>
            <person name="Shao Y."/>
        </authorList>
    </citation>
    <scope>NUCLEOTIDE SEQUENCE [LARGE SCALE GENOMIC DNA]</scope>
    <source>
        <strain>K12 / MG1655 / ATCC 47076</strain>
    </source>
</reference>
<reference key="2">
    <citation type="journal article" date="2006" name="Mol. Syst. Biol.">
        <title>Highly accurate genome sequences of Escherichia coli K-12 strains MG1655 and W3110.</title>
        <authorList>
            <person name="Hayashi K."/>
            <person name="Morooka N."/>
            <person name="Yamamoto Y."/>
            <person name="Fujita K."/>
            <person name="Isono K."/>
            <person name="Choi S."/>
            <person name="Ohtsubo E."/>
            <person name="Baba T."/>
            <person name="Wanner B.L."/>
            <person name="Mori H."/>
            <person name="Horiuchi T."/>
        </authorList>
    </citation>
    <scope>NUCLEOTIDE SEQUENCE [LARGE SCALE GENOMIC DNA]</scope>
    <source>
        <strain>K12 / W3110 / ATCC 27325 / DSM 5911</strain>
    </source>
</reference>
<reference key="3">
    <citation type="journal article" date="1995" name="J. Biol. Chem.">
        <title>Novel proteins of the phosphotransferase system encoded within the rpoN operon of Escherichia coli. Enzyme IIANtr affects growth on organic nitrogen and the conditional lethality of an erats mutant.</title>
        <authorList>
            <person name="Powell B.S."/>
            <person name="Court D.L."/>
            <person name="Inada T."/>
            <person name="Nakamura Y."/>
            <person name="Michotey V."/>
            <person name="Cui X."/>
            <person name="Reizer A."/>
            <person name="Saier M.H. Jr."/>
            <person name="Reizer J."/>
        </authorList>
    </citation>
    <scope>NUCLEOTIDE SEQUENCE [GENOMIC DNA] OF 136-191</scope>
    <source>
        <strain>K12 / W3110 / ATCC 27325 / DSM 5911</strain>
    </source>
</reference>
<reference key="4">
    <citation type="journal article" date="2009" name="FEBS Lett.">
        <title>Biochemical characterization of an ABC transporter LptBFGC complex required for the outer membrane sorting of lipopolysaccharides.</title>
        <authorList>
            <person name="Narita S."/>
            <person name="Tokuda H."/>
        </authorList>
    </citation>
    <scope>PROTEIN SEQUENCE OF 1-5</scope>
    <scope>INTERACTION WITH LPTBFG</scope>
</reference>
<reference key="5">
    <citation type="journal article" date="2006" name="Res. Microbiol.">
        <title>Non-essential KDO biosynthesis and new essential cell envelope biogenesis genes in the Escherichia coli yrbG-yhbG locus.</title>
        <authorList>
            <person name="Sperandeo P."/>
            <person name="Pozzi C."/>
            <person name="Deho G."/>
            <person name="Polissi A."/>
        </authorList>
    </citation>
    <scope>FUNCTION IN LPS BIOSYNTHESIS</scope>
    <scope>DISRUPTION PHENOTYPE</scope>
</reference>
<reference key="6">
    <citation type="journal article" date="2008" name="J. Bacteriol.">
        <title>Functional analysis of the protein machinery required for transport of lipopolysaccharide to the outer membrane of Escherichia coli.</title>
        <authorList>
            <person name="Sperandeo P."/>
            <person name="Lau F.K."/>
            <person name="Carpentieri A."/>
            <person name="De Castro C."/>
            <person name="Molinaro A."/>
            <person name="Deho G."/>
            <person name="Silhavy T.J."/>
            <person name="Polissi A."/>
        </authorList>
    </citation>
    <scope>FUNCTION IN LIPOPOLYSACCHARIDE TRANSPORT</scope>
    <scope>SUBCELLULAR LOCATION</scope>
    <source>
        <strain>K12 / MC4100 / ATCC 35695 / DSM 6574</strain>
    </source>
</reference>
<reference key="7">
    <citation type="journal article" date="2010" name="Biochemistry">
        <title>Proteins required for lipopolysaccharide assembly in Escherichia coli form a transenvelope complex.</title>
        <authorList>
            <person name="Chng S.S."/>
            <person name="Gronenberg L.S."/>
            <person name="Kahne D."/>
        </authorList>
    </citation>
    <scope>SUBUNIT</scope>
    <scope>INTERACTION WITH LPTBFG</scope>
</reference>
<reference key="8">
    <citation type="journal article" date="2011" name="Biochem. Biophys. Res. Commun.">
        <title>Characterization of interactions between LPS transport proteins of the Lpt system.</title>
        <authorList>
            <person name="Bowyer A."/>
            <person name="Baardsnes J."/>
            <person name="Ajamian E."/>
            <person name="Zhang L."/>
            <person name="Cygler M."/>
        </authorList>
    </citation>
    <scope>FUNCTION</scope>
    <scope>INTERACTION WITH LPTA</scope>
</reference>
<reference key="9">
    <citation type="journal article" date="2011" name="J. Bacteriol.">
        <title>New insights into the Lpt machinery for lipopolysaccharide transport to the cell surface: LptA-LptC interaction and LptA stability as sensors of a properly assembled transenvelope complex.</title>
        <authorList>
            <person name="Sperandeo P."/>
            <person name="Villa R."/>
            <person name="Martorana A.M."/>
            <person name="Samalikova M."/>
            <person name="Grandori R."/>
            <person name="Deho G."/>
            <person name="Polissi A."/>
        </authorList>
    </citation>
    <scope>FUNCTION</scope>
    <scope>SUBUNIT</scope>
    <scope>INTERACTION WITH LPTA</scope>
    <scope>MUTAGENESIS OF GLY-56; GLY-153 AND 177-LYS--PRO-191</scope>
</reference>
<reference key="10">
    <citation type="journal article" date="2012" name="Biochemistry">
        <title>Regulated assembly of the transenvelope protein complex required for lipopolysaccharide export.</title>
        <authorList>
            <person name="Freinkman E."/>
            <person name="Okuda S."/>
            <person name="Ruiz N."/>
            <person name="Kahne D."/>
        </authorList>
    </citation>
    <scope>SUBUNIT</scope>
    <scope>INTERACTION WITH LPTA</scope>
</reference>
<reference key="11">
    <citation type="journal article" date="2010" name="J. Biol. Chem.">
        <title>Structure and functional analysis of LptC, a conserved membrane protein involved in the lipopolysaccharide export pathway in Escherichia coli.</title>
        <authorList>
            <person name="Tran A.X."/>
            <person name="Dong C."/>
            <person name="Whitfield C."/>
        </authorList>
    </citation>
    <scope>X-RAY CRYSTALLOGRAPHY (2.2 ANGSTROMS) OF 23-191</scope>
    <scope>FUNCTION IN LIPOPOLYSACCHARIDE TRANSPORT</scope>
    <scope>SUBCELLULAR LOCATION</scope>
</reference>
<dbReference type="EMBL" id="U18997">
    <property type="protein sequence ID" value="AAA58001.1"/>
    <property type="molecule type" value="Genomic_DNA"/>
</dbReference>
<dbReference type="EMBL" id="U00096">
    <property type="protein sequence ID" value="AAC76231.1"/>
    <property type="molecule type" value="Genomic_DNA"/>
</dbReference>
<dbReference type="EMBL" id="AP009048">
    <property type="protein sequence ID" value="BAE77243.1"/>
    <property type="molecule type" value="Genomic_DNA"/>
</dbReference>
<dbReference type="EMBL" id="U12684">
    <property type="status" value="NOT_ANNOTATED_CDS"/>
    <property type="molecule type" value="Genomic_DNA"/>
</dbReference>
<dbReference type="PIR" id="A65111">
    <property type="entry name" value="A65111"/>
</dbReference>
<dbReference type="RefSeq" id="NP_417666.1">
    <property type="nucleotide sequence ID" value="NC_000913.3"/>
</dbReference>
<dbReference type="RefSeq" id="WP_000030537.1">
    <property type="nucleotide sequence ID" value="NZ_STEB01000012.1"/>
</dbReference>
<dbReference type="PDB" id="3MY2">
    <property type="method" value="X-ray"/>
    <property type="resolution" value="2.20 A"/>
    <property type="chains" value="A=23-191"/>
</dbReference>
<dbReference type="PDB" id="4B54">
    <property type="method" value="X-ray"/>
    <property type="resolution" value="2.80 A"/>
    <property type="chains" value="A/B=24-191"/>
</dbReference>
<dbReference type="PDB" id="6MI7">
    <property type="method" value="EM"/>
    <property type="resolution" value="4.20 A"/>
    <property type="chains" value="C=1-191"/>
</dbReference>
<dbReference type="PDBsum" id="3MY2"/>
<dbReference type="PDBsum" id="4B54"/>
<dbReference type="PDBsum" id="6MI7"/>
<dbReference type="EMDB" id="EMD-9125"/>
<dbReference type="SMR" id="P0ADV9"/>
<dbReference type="BioGRID" id="4259279">
    <property type="interactions" value="275"/>
</dbReference>
<dbReference type="DIP" id="DIP-12912N"/>
<dbReference type="FunCoup" id="P0ADV9">
    <property type="interactions" value="76"/>
</dbReference>
<dbReference type="IntAct" id="P0ADV9">
    <property type="interactions" value="3"/>
</dbReference>
<dbReference type="MINT" id="P0ADV9"/>
<dbReference type="STRING" id="511145.b3199"/>
<dbReference type="jPOST" id="P0ADV9"/>
<dbReference type="PaxDb" id="511145-b3199"/>
<dbReference type="EnsemblBacteria" id="AAC76231">
    <property type="protein sequence ID" value="AAC76231"/>
    <property type="gene ID" value="b3199"/>
</dbReference>
<dbReference type="GeneID" id="75206055"/>
<dbReference type="GeneID" id="947722"/>
<dbReference type="KEGG" id="ecj:JW3166"/>
<dbReference type="KEGG" id="eco:b3199"/>
<dbReference type="KEGG" id="ecoc:C3026_17410"/>
<dbReference type="PATRIC" id="fig|1411691.4.peg.3532"/>
<dbReference type="EchoBASE" id="EB2657"/>
<dbReference type="eggNOG" id="COG3117">
    <property type="taxonomic scope" value="Bacteria"/>
</dbReference>
<dbReference type="HOGENOM" id="CLU_105814_2_1_6"/>
<dbReference type="InParanoid" id="P0ADV9"/>
<dbReference type="OMA" id="WFTQPVM"/>
<dbReference type="OrthoDB" id="5659892at2"/>
<dbReference type="PhylomeDB" id="P0ADV9"/>
<dbReference type="BioCyc" id="EcoCyc:G7664-MONOMER"/>
<dbReference type="BioCyc" id="MetaCyc:G7664-MONOMER"/>
<dbReference type="EvolutionaryTrace" id="P0ADV9"/>
<dbReference type="PRO" id="PR:P0ADV9"/>
<dbReference type="Proteomes" id="UP000000625">
    <property type="component" value="Chromosome"/>
</dbReference>
<dbReference type="GO" id="GO:0016020">
    <property type="term" value="C:membrane"/>
    <property type="evidence" value="ECO:0000314"/>
    <property type="project" value="EcoCyc"/>
</dbReference>
<dbReference type="GO" id="GO:0030288">
    <property type="term" value="C:outer membrane-bounded periplasmic space"/>
    <property type="evidence" value="ECO:0000314"/>
    <property type="project" value="EcoCyc"/>
</dbReference>
<dbReference type="GO" id="GO:0005886">
    <property type="term" value="C:plasma membrane"/>
    <property type="evidence" value="ECO:0000314"/>
    <property type="project" value="EcoCyc"/>
</dbReference>
<dbReference type="GO" id="GO:1990351">
    <property type="term" value="C:transporter complex"/>
    <property type="evidence" value="ECO:0000314"/>
    <property type="project" value="EcoCyc"/>
</dbReference>
<dbReference type="GO" id="GO:0017089">
    <property type="term" value="F:glycolipid transfer activity"/>
    <property type="evidence" value="ECO:0000315"/>
    <property type="project" value="EcoCyc"/>
</dbReference>
<dbReference type="GO" id="GO:0042802">
    <property type="term" value="F:identical protein binding"/>
    <property type="evidence" value="ECO:0000353"/>
    <property type="project" value="IntAct"/>
</dbReference>
<dbReference type="GO" id="GO:0015221">
    <property type="term" value="F:lipopolysaccharide transmembrane transporter activity"/>
    <property type="evidence" value="ECO:0007669"/>
    <property type="project" value="InterPro"/>
</dbReference>
<dbReference type="GO" id="GO:0043165">
    <property type="term" value="P:Gram-negative-bacterium-type cell outer membrane assembly"/>
    <property type="evidence" value="ECO:0007669"/>
    <property type="project" value="UniProtKB-UniRule"/>
</dbReference>
<dbReference type="GO" id="GO:0015920">
    <property type="term" value="P:lipopolysaccharide transport"/>
    <property type="evidence" value="ECO:0000315"/>
    <property type="project" value="EcoCyc"/>
</dbReference>
<dbReference type="DisProt" id="DP02197"/>
<dbReference type="FunFam" id="2.60.450.10:FF:000001">
    <property type="entry name" value="Lipopolysaccharide export system protein LptC"/>
    <property type="match status" value="1"/>
</dbReference>
<dbReference type="Gene3D" id="2.60.450.10">
    <property type="entry name" value="Lipopolysaccharide (LPS) transport protein A like domain"/>
    <property type="match status" value="1"/>
</dbReference>
<dbReference type="HAMAP" id="MF_01915">
    <property type="entry name" value="LPS_assembly_LptC"/>
    <property type="match status" value="1"/>
</dbReference>
<dbReference type="InterPro" id="IPR010664">
    <property type="entry name" value="LipoPS_assembly_LptC-rel"/>
</dbReference>
<dbReference type="InterPro" id="IPR052363">
    <property type="entry name" value="LPS_export_LptC"/>
</dbReference>
<dbReference type="InterPro" id="IPR026265">
    <property type="entry name" value="LptC"/>
</dbReference>
<dbReference type="NCBIfam" id="TIGR04409">
    <property type="entry name" value="LptC_YrbK"/>
    <property type="match status" value="1"/>
</dbReference>
<dbReference type="NCBIfam" id="NF008142">
    <property type="entry name" value="PRK10893.1"/>
    <property type="match status" value="1"/>
</dbReference>
<dbReference type="PANTHER" id="PTHR37481">
    <property type="entry name" value="LIPOPOLYSACCHARIDE EXPORT SYSTEM PROTEIN LPTC"/>
    <property type="match status" value="1"/>
</dbReference>
<dbReference type="PANTHER" id="PTHR37481:SF1">
    <property type="entry name" value="LIPOPOLYSACCHARIDE EXPORT SYSTEM PROTEIN LPTC"/>
    <property type="match status" value="1"/>
</dbReference>
<dbReference type="Pfam" id="PF06835">
    <property type="entry name" value="LptC"/>
    <property type="match status" value="1"/>
</dbReference>
<dbReference type="PIRSF" id="PIRSF028513">
    <property type="entry name" value="LptC"/>
    <property type="match status" value="1"/>
</dbReference>
<feature type="chain" id="PRO_0000169470" description="Lipopolysaccharide export system protein LptC">
    <location>
        <begin position="1"/>
        <end position="191"/>
    </location>
</feature>
<feature type="transmembrane region" description="Helical" evidence="1">
    <location>
        <begin position="7"/>
        <end position="25"/>
    </location>
</feature>
<feature type="mutagenesis site" description="Impairs LPS transport. Does not abolish interaction with LptA." evidence="7">
    <original>G</original>
    <variation>V</variation>
    <location>
        <position position="56"/>
    </location>
</feature>
<feature type="mutagenesis site" description="Impairs LPS transport. Fails to interact with LptA." evidence="7">
    <original>G</original>
    <variation>R</variation>
    <location>
        <position position="153"/>
    </location>
</feature>
<feature type="mutagenesis site" description="Fails to interact with LptA." evidence="7">
    <location>
        <begin position="177"/>
        <end position="191"/>
    </location>
</feature>
<feature type="sequence conflict" description="In Ref. 4; AA sequence." evidence="10" ref="4">
    <original>S</original>
    <variation>G</variation>
    <location>
        <position position="2"/>
    </location>
</feature>
<feature type="strand" evidence="12">
    <location>
        <begin position="60"/>
        <end position="63"/>
    </location>
</feature>
<feature type="strand" evidence="12">
    <location>
        <begin position="65"/>
        <end position="70"/>
    </location>
</feature>
<feature type="turn" evidence="12">
    <location>
        <begin position="71"/>
        <end position="74"/>
    </location>
</feature>
<feature type="strand" evidence="12">
    <location>
        <begin position="75"/>
        <end position="80"/>
    </location>
</feature>
<feature type="strand" evidence="12">
    <location>
        <begin position="82"/>
        <end position="86"/>
    </location>
</feature>
<feature type="strand" evidence="12">
    <location>
        <begin position="92"/>
        <end position="97"/>
    </location>
</feature>
<feature type="strand" evidence="12">
    <location>
        <begin position="99"/>
        <end position="103"/>
    </location>
</feature>
<feature type="strand" evidence="12">
    <location>
        <begin position="107"/>
        <end position="119"/>
    </location>
</feature>
<feature type="strand" evidence="12">
    <location>
        <begin position="121"/>
        <end position="123"/>
    </location>
</feature>
<feature type="strand" evidence="12">
    <location>
        <begin position="125"/>
        <end position="137"/>
    </location>
</feature>
<feature type="turn" evidence="12">
    <location>
        <begin position="138"/>
        <end position="140"/>
    </location>
</feature>
<feature type="strand" evidence="12">
    <location>
        <begin position="142"/>
        <end position="155"/>
    </location>
</feature>
<feature type="strand" evidence="12">
    <location>
        <begin position="157"/>
        <end position="166"/>
    </location>
</feature>
<feature type="turn" evidence="12">
    <location>
        <begin position="167"/>
        <end position="170"/>
    </location>
</feature>
<feature type="strand" evidence="12">
    <location>
        <begin position="171"/>
        <end position="180"/>
    </location>
</feature>
<evidence type="ECO:0000255" key="1">
    <source>
        <dbReference type="HAMAP-Rule" id="MF_01915"/>
    </source>
</evidence>
<evidence type="ECO:0000269" key="2">
    <source>
    </source>
</evidence>
<evidence type="ECO:0000269" key="3">
    <source>
    </source>
</evidence>
<evidence type="ECO:0000269" key="4">
    <source>
    </source>
</evidence>
<evidence type="ECO:0000269" key="5">
    <source>
    </source>
</evidence>
<evidence type="ECO:0000269" key="6">
    <source>
    </source>
</evidence>
<evidence type="ECO:0000269" key="7">
    <source>
    </source>
</evidence>
<evidence type="ECO:0000269" key="8">
    <source>
    </source>
</evidence>
<evidence type="ECO:0000269" key="9">
    <source>
    </source>
</evidence>
<evidence type="ECO:0000305" key="10"/>
<evidence type="ECO:0000305" key="11">
    <source>
    </source>
</evidence>
<evidence type="ECO:0007829" key="12">
    <source>
        <dbReference type="PDB" id="3MY2"/>
    </source>
</evidence>
<organism>
    <name type="scientific">Escherichia coli (strain K12)</name>
    <dbReference type="NCBI Taxonomy" id="83333"/>
    <lineage>
        <taxon>Bacteria</taxon>
        <taxon>Pseudomonadati</taxon>
        <taxon>Pseudomonadota</taxon>
        <taxon>Gammaproteobacteria</taxon>
        <taxon>Enterobacterales</taxon>
        <taxon>Enterobacteriaceae</taxon>
        <taxon>Escherichia</taxon>
    </lineage>
</organism>
<proteinExistence type="evidence at protein level"/>
<gene>
    <name evidence="1" type="primary">lptC</name>
    <name type="synonym">yrbK</name>
    <name type="ordered locus">b3199</name>
    <name type="ordered locus">JW3166</name>
</gene>
<comment type="function">
    <text evidence="1 2 3 6 7 8">Involved in the assembly of lipopolysaccharide (LPS). Required for the translocation of LPS from the inner membrane to the outer membrane. Facilitates the transfer of LPS from the inner membrane to the periplasmic protein LptA. Could be a docking site for LptA.</text>
</comment>
<comment type="subunit">
    <text evidence="1 4 5 7 8 9">Component of the lipopolysaccharide transport and assembly complex. Interacts with LptA and the LptBFG transporter complex. When overexpressed, can form homodimers in vivo.</text>
</comment>
<comment type="interaction">
    <interactant intactId="EBI-1131969">
        <id>P0ADV9</id>
    </interactant>
    <interactant intactId="EBI-1132001">
        <id>P0ADV1</id>
        <label>lptA</label>
    </interactant>
    <organismsDiffer>false</organismsDiffer>
    <experiments>3</experiments>
</comment>
<comment type="interaction">
    <interactant intactId="EBI-1131969">
        <id>P0ADV9</id>
    </interactant>
    <interactant intactId="EBI-1131969">
        <id>P0ADV9</id>
        <label>lptC</label>
    </interactant>
    <organismsDiffer>false</organismsDiffer>
    <experiments>4</experiments>
</comment>
<comment type="subcellular location">
    <subcellularLocation>
        <location evidence="1 3 6">Cell inner membrane</location>
        <topology evidence="1 3 6">Single-pass membrane protein</topology>
    </subcellularLocation>
</comment>
<comment type="disruption phenotype">
    <text evidence="2">Leads to irreversible cell damage, growth arrest and an extreme sensitivity to SDS.</text>
</comment>
<comment type="miscellaneous">
    <text evidence="11">Interacts with the LptBFG ABC transporter complex, but does not affect its ATPase activity.</text>
</comment>
<comment type="similarity">
    <text evidence="1">Belongs to the LptC family.</text>
</comment>
<accession>P0ADV9</accession>
<accession>P45397</accession>
<accession>Q2M913</accession>
<name>LPTC_ECOLI</name>